<evidence type="ECO:0000250" key="1"/>
<evidence type="ECO:0000256" key="2">
    <source>
        <dbReference type="SAM" id="MobiDB-lite"/>
    </source>
</evidence>
<evidence type="ECO:0000305" key="3"/>
<proteinExistence type="evidence at transcript level"/>
<keyword id="KW-0010">Activator</keyword>
<keyword id="KW-0217">Developmental protein</keyword>
<keyword id="KW-0238">DNA-binding</keyword>
<keyword id="KW-0539">Nucleus</keyword>
<keyword id="KW-0804">Transcription</keyword>
<keyword id="KW-0805">Transcription regulation</keyword>
<reference key="1">
    <citation type="journal article" date="1993" name="Plant Mol. Biol.">
        <title>Cloning and sequence analysis of a flo/lfy homologue isolated from cauliflower (Brassica oleracea L. var. botrytis).</title>
        <authorList>
            <person name="Anthony R.G."/>
            <person name="James P.E."/>
            <person name="Jordan B.R."/>
        </authorList>
    </citation>
    <scope>NUCLEOTIDE SEQUENCE [MRNA]</scope>
</reference>
<feature type="chain" id="PRO_0000129148" description="Putative transcription factor BOFH">
    <location>
        <begin position="1"/>
        <end position="415"/>
    </location>
</feature>
<feature type="DNA-binding region" evidence="1">
    <location>
        <begin position="234"/>
        <end position="238"/>
    </location>
</feature>
<feature type="DNA-binding region" evidence="1">
    <location>
        <begin position="303"/>
        <end position="310"/>
    </location>
</feature>
<feature type="DNA-binding region" evidence="1">
    <location>
        <begin position="374"/>
        <end position="377"/>
    </location>
</feature>
<feature type="region of interest" description="Disordered" evidence="2">
    <location>
        <begin position="159"/>
        <end position="221"/>
    </location>
</feature>
<feature type="compositionally biased region" description="Gly residues" evidence="2">
    <location>
        <begin position="174"/>
        <end position="183"/>
    </location>
</feature>
<feature type="compositionally biased region" description="Basic residues" evidence="2">
    <location>
        <begin position="193"/>
        <end position="202"/>
    </location>
</feature>
<feature type="compositionally biased region" description="Acidic residues" evidence="2">
    <location>
        <begin position="206"/>
        <end position="220"/>
    </location>
</feature>
<feature type="site" description="Interaction with DNA" evidence="1">
    <location>
        <position position="281"/>
    </location>
</feature>
<feature type="site" description="Interaction with DNA" evidence="1">
    <location>
        <position position="288"/>
    </location>
</feature>
<feature type="site" description="Interaction with DNA" evidence="1">
    <location>
        <position position="292"/>
    </location>
</feature>
<feature type="site" description="Interaction with DNA" evidence="1">
    <location>
        <position position="339"/>
    </location>
</feature>
<dbReference type="EMBL" id="Z18362">
    <property type="protein sequence ID" value="CAA79166.1"/>
    <property type="molecule type" value="mRNA"/>
</dbReference>
<dbReference type="PIR" id="S37340">
    <property type="entry name" value="S37340"/>
</dbReference>
<dbReference type="SMR" id="Q05536"/>
<dbReference type="GO" id="GO:0005634">
    <property type="term" value="C:nucleus"/>
    <property type="evidence" value="ECO:0007669"/>
    <property type="project" value="UniProtKB-SubCell"/>
</dbReference>
<dbReference type="GO" id="GO:0003677">
    <property type="term" value="F:DNA binding"/>
    <property type="evidence" value="ECO:0007669"/>
    <property type="project" value="UniProtKB-KW"/>
</dbReference>
<dbReference type="GO" id="GO:0006355">
    <property type="term" value="P:regulation of DNA-templated transcription"/>
    <property type="evidence" value="ECO:0007669"/>
    <property type="project" value="InterPro"/>
</dbReference>
<dbReference type="FunFam" id="1.10.4180.10:FF:000001">
    <property type="entry name" value="Transcription factor floricaula/leafy"/>
    <property type="match status" value="1"/>
</dbReference>
<dbReference type="Gene3D" id="1.10.4180.10">
    <property type="entry name" value="Protein LEAFY"/>
    <property type="match status" value="1"/>
</dbReference>
<dbReference type="InterPro" id="IPR035209">
    <property type="entry name" value="FLO/LFY_C"/>
</dbReference>
<dbReference type="InterPro" id="IPR002910">
    <property type="entry name" value="FLO_LFY"/>
</dbReference>
<dbReference type="InterPro" id="IPR038276">
    <property type="entry name" value="Floricaula/leafy_C_sf"/>
</dbReference>
<dbReference type="InterPro" id="IPR035079">
    <property type="entry name" value="LFY_SAM"/>
</dbReference>
<dbReference type="PANTHER" id="PTHR36079">
    <property type="entry name" value="PROTEIN LEAFY"/>
    <property type="match status" value="1"/>
</dbReference>
<dbReference type="PANTHER" id="PTHR36079:SF1">
    <property type="entry name" value="PROTEIN LEAFY"/>
    <property type="match status" value="1"/>
</dbReference>
<dbReference type="Pfam" id="PF17538">
    <property type="entry name" value="C_LFY_FLO"/>
    <property type="match status" value="1"/>
</dbReference>
<dbReference type="Pfam" id="PF01698">
    <property type="entry name" value="SAM_LFY"/>
    <property type="match status" value="1"/>
</dbReference>
<name>BOFH_BRAOB</name>
<protein>
    <recommendedName>
        <fullName>Putative transcription factor BOFH</fullName>
    </recommendedName>
</protein>
<sequence>MDPEGFTSGLFRWNPTRVMVQAPTPIPPPQQQSPATPQTAAFGMRLGGLEGLFGPYGVRFYTAAKIAELGFTASTLVGMKDEELEDMMNSLSHIFRWELLVGERYGIKAAVRAERRRLQEEEEEESSRRRHLLLSAAGDSGTHLALDALSQEDDWTGLSQEPVQHQDQTDAAGINGGGRGGYWEAGQTTIKKQQQRRRKKRLYVSETDDDGNEGEDDDGMDIVNGSGVGMERQREHPFIVTEPGEVARGKKNGLDYLFHLYEQCREFLLQVQTIAKDRGEKCPTKVTNQVFRYAKKSGANYINKPKMRHYVHCYALHCLDEEASNALRSAFKVRGENVGSWRQACYKPLVDIACRHGWDIDAVFNAHPRLSIWYVPTKLRQLCHLERNNAEAAAATLVGGISCRDRLRLDALGFN</sequence>
<organism>
    <name type="scientific">Brassica oleracea var. botrytis</name>
    <name type="common">Cauliflower</name>
    <dbReference type="NCBI Taxonomy" id="3715"/>
    <lineage>
        <taxon>Eukaryota</taxon>
        <taxon>Viridiplantae</taxon>
        <taxon>Streptophyta</taxon>
        <taxon>Embryophyta</taxon>
        <taxon>Tracheophyta</taxon>
        <taxon>Spermatophyta</taxon>
        <taxon>Magnoliopsida</taxon>
        <taxon>eudicotyledons</taxon>
        <taxon>Gunneridae</taxon>
        <taxon>Pentapetalae</taxon>
        <taxon>rosids</taxon>
        <taxon>malvids</taxon>
        <taxon>Brassicales</taxon>
        <taxon>Brassicaceae</taxon>
        <taxon>Brassiceae</taxon>
        <taxon>Brassica</taxon>
    </lineage>
</organism>
<comment type="function">
    <text>Controls floral meristem identity. Is required very early in flower development and may act here as a transcription factor.</text>
</comment>
<comment type="subcellular location">
    <subcellularLocation>
        <location evidence="3">Nucleus</location>
    </subcellularLocation>
</comment>
<comment type="tissue specificity">
    <text>Acts in the floral primordia.</text>
</comment>
<comment type="developmental stage">
    <text>Expressed at an early stage of floral initiation.</text>
</comment>
<comment type="similarity">
    <text evidence="3">Belongs to the FLO/LFY family.</text>
</comment>
<accession>Q05536</accession>